<sequence length="154" mass="17318">MGRFIFVSFGLLVVFLSLSGTGADVDCLPGWSAYDQSCYRVFKLLKTWDDAEKFCTERPKGGHLVSIESAGERDFVAQLVSENKQTDNVWLGLKIQSKGQQCSTEWTDGSSVSYENFSEYQSKKCFVLEKNTGFRTWLNLNCGSEYAFVCKSPP</sequence>
<accession>Q8JIV9</accession>
<name>SLA1_DEIAC</name>
<comment type="function">
    <text evidence="4 5">Agglucetin specifically causes platelet aggregation and surface exposure of integrin alpha-IIb/beta-3 with a GPIb-(GP1BA-) dependent manner in washed platelets. It binds to human platelets in a saturable manner, and its binding is specifically blocked by anti-GP Ib mAb. It regulates endothelial cell survival and promotes angiogenesis by activating integrin alpha-v/beta-3 signaling through FAK/phosphatidylinositol 3-kinase (PI3K)/Akt pathway.</text>
</comment>
<comment type="subunit">
    <text evidence="4 6">Heterotetramer of the subunits alpha-1, alpha-2, beta-1 and beta-2; disulfide-linked.</text>
</comment>
<comment type="subcellular location">
    <subcellularLocation>
        <location evidence="1">Secreted</location>
    </subcellularLocation>
</comment>
<comment type="tissue specificity">
    <text>Expressed by the venom gland.</text>
</comment>
<comment type="similarity">
    <text evidence="7">Belongs to the snaclec family.</text>
</comment>
<comment type="caution">
    <text evidence="7">PubMed:22447656 describes a heterodimeric snaclec (named agkisacucetin) that is presented as being another protein than agglucetin, despite the very high sequence similarity. Agkisacucetin is described as an inhibitor of platelet aggregation, but no experimental data or cited references support this description. In addition, according to PubMed:22447656, agkisacucetin cannot be tetrameric, because cysteine residues are missing. However, non-covalently linked tetramers are found in snaclecs, as exemplified by rhodocetin.</text>
</comment>
<keyword id="KW-0002">3D-structure</keyword>
<keyword id="KW-0903">Direct protein sequencing</keyword>
<keyword id="KW-1015">Disulfide bond</keyword>
<keyword id="KW-0325">Glycoprotein</keyword>
<keyword id="KW-1199">Hemostasis impairing toxin</keyword>
<keyword id="KW-1202">Platelet aggregation activating toxin</keyword>
<keyword id="KW-0964">Secreted</keyword>
<keyword id="KW-0732">Signal</keyword>
<keyword id="KW-0800">Toxin</keyword>
<dbReference type="EMBL" id="AY091759">
    <property type="protein sequence ID" value="AAM22787.1"/>
    <property type="molecule type" value="mRNA"/>
</dbReference>
<dbReference type="EMBL" id="AF540645">
    <property type="protein sequence ID" value="AAN23124.1"/>
    <property type="molecule type" value="mRNA"/>
</dbReference>
<dbReference type="PDB" id="3UBU">
    <property type="method" value="X-ray"/>
    <property type="resolution" value="1.91 A"/>
    <property type="chains" value="A=24-154"/>
</dbReference>
<dbReference type="PDB" id="6XFQ">
    <property type="method" value="X-ray"/>
    <property type="resolution" value="3.30 A"/>
    <property type="chains" value="A=1-154"/>
</dbReference>
<dbReference type="PDBsum" id="3UBU"/>
<dbReference type="PDBsum" id="6XFQ"/>
<dbReference type="SMR" id="Q8JIV9"/>
<dbReference type="EvolutionaryTrace" id="Q8JIV9"/>
<dbReference type="GO" id="GO:0005576">
    <property type="term" value="C:extracellular region"/>
    <property type="evidence" value="ECO:0007669"/>
    <property type="project" value="UniProtKB-SubCell"/>
</dbReference>
<dbReference type="GO" id="GO:0090729">
    <property type="term" value="F:toxin activity"/>
    <property type="evidence" value="ECO:0007669"/>
    <property type="project" value="UniProtKB-KW"/>
</dbReference>
<dbReference type="FunFam" id="3.10.100.10:FF:000087">
    <property type="entry name" value="Snaclec rhodocetin subunit delta"/>
    <property type="match status" value="1"/>
</dbReference>
<dbReference type="Gene3D" id="3.10.100.10">
    <property type="entry name" value="Mannose-Binding Protein A, subunit A"/>
    <property type="match status" value="1"/>
</dbReference>
<dbReference type="InterPro" id="IPR001304">
    <property type="entry name" value="C-type_lectin-like"/>
</dbReference>
<dbReference type="InterPro" id="IPR016186">
    <property type="entry name" value="C-type_lectin-like/link_sf"/>
</dbReference>
<dbReference type="InterPro" id="IPR050111">
    <property type="entry name" value="C-type_lectin/snaclec_domain"/>
</dbReference>
<dbReference type="InterPro" id="IPR018378">
    <property type="entry name" value="C-type_lectin_CS"/>
</dbReference>
<dbReference type="InterPro" id="IPR016187">
    <property type="entry name" value="CTDL_fold"/>
</dbReference>
<dbReference type="PANTHER" id="PTHR22803">
    <property type="entry name" value="MANNOSE, PHOSPHOLIPASE, LECTIN RECEPTOR RELATED"/>
    <property type="match status" value="1"/>
</dbReference>
<dbReference type="Pfam" id="PF00059">
    <property type="entry name" value="Lectin_C"/>
    <property type="match status" value="1"/>
</dbReference>
<dbReference type="PRINTS" id="PR01504">
    <property type="entry name" value="PNCREATITSAP"/>
</dbReference>
<dbReference type="SMART" id="SM00034">
    <property type="entry name" value="CLECT"/>
    <property type="match status" value="1"/>
</dbReference>
<dbReference type="SUPFAM" id="SSF56436">
    <property type="entry name" value="C-type lectin-like"/>
    <property type="match status" value="1"/>
</dbReference>
<dbReference type="PROSITE" id="PS00615">
    <property type="entry name" value="C_TYPE_LECTIN_1"/>
    <property type="match status" value="1"/>
</dbReference>
<dbReference type="PROSITE" id="PS50041">
    <property type="entry name" value="C_TYPE_LECTIN_2"/>
    <property type="match status" value="1"/>
</dbReference>
<proteinExistence type="evidence at protein level"/>
<evidence type="ECO:0000250" key="1"/>
<evidence type="ECO:0000255" key="2"/>
<evidence type="ECO:0000255" key="3">
    <source>
        <dbReference type="PROSITE-ProRule" id="PRU00040"/>
    </source>
</evidence>
<evidence type="ECO:0000269" key="4">
    <source>
    </source>
</evidence>
<evidence type="ECO:0000269" key="5">
    <source>
    </source>
</evidence>
<evidence type="ECO:0000269" key="6">
    <source>
    </source>
</evidence>
<evidence type="ECO:0000305" key="7"/>
<evidence type="ECO:0007829" key="8">
    <source>
        <dbReference type="PDB" id="3UBU"/>
    </source>
</evidence>
<evidence type="ECO:0007829" key="9">
    <source>
        <dbReference type="PDB" id="6XFQ"/>
    </source>
</evidence>
<protein>
    <recommendedName>
        <fullName>Snaclec agglucetin subunit alpha-1</fullName>
    </recommendedName>
    <alternativeName>
        <fullName>Agkisacucetin subunit alpha</fullName>
    </alternativeName>
</protein>
<feature type="signal peptide">
    <location>
        <begin position="1"/>
        <end position="23"/>
    </location>
</feature>
<feature type="chain" id="PRO_0000355233" description="Snaclec agglucetin subunit alpha-1">
    <location>
        <begin position="24"/>
        <end position="154"/>
    </location>
</feature>
<feature type="domain" description="C-type lectin" evidence="3">
    <location>
        <begin position="34"/>
        <end position="151"/>
    </location>
</feature>
<feature type="glycosylation site" description="N-linked (GlcNAc...) asparagine" evidence="2">
    <location>
        <position position="116"/>
    </location>
</feature>
<feature type="disulfide bond" evidence="3 6">
    <location>
        <begin position="27"/>
        <end position="38"/>
    </location>
</feature>
<feature type="disulfide bond" evidence="3 6">
    <location>
        <begin position="55"/>
        <end position="150"/>
    </location>
</feature>
<feature type="disulfide bond" description="Interchain (with C-100 in subunit beta-2)" evidence="3 6">
    <location>
        <position position="102"/>
    </location>
</feature>
<feature type="disulfide bond" evidence="3 6">
    <location>
        <begin position="125"/>
        <end position="142"/>
    </location>
</feature>
<feature type="strand" evidence="8">
    <location>
        <begin position="32"/>
        <end position="34"/>
    </location>
</feature>
<feature type="strand" evidence="8">
    <location>
        <begin position="37"/>
        <end position="46"/>
    </location>
</feature>
<feature type="helix" evidence="8">
    <location>
        <begin position="48"/>
        <end position="56"/>
    </location>
</feature>
<feature type="helix" evidence="8">
    <location>
        <begin position="70"/>
        <end position="82"/>
    </location>
</feature>
<feature type="turn" evidence="9">
    <location>
        <begin position="83"/>
        <end position="85"/>
    </location>
</feature>
<feature type="strand" evidence="8">
    <location>
        <begin position="89"/>
        <end position="96"/>
    </location>
</feature>
<feature type="strand" evidence="8">
    <location>
        <begin position="98"/>
        <end position="102"/>
    </location>
</feature>
<feature type="turn" evidence="8">
    <location>
        <begin position="119"/>
        <end position="121"/>
    </location>
</feature>
<feature type="strand" evidence="8">
    <location>
        <begin position="125"/>
        <end position="128"/>
    </location>
</feature>
<feature type="helix" evidence="8">
    <location>
        <begin position="130"/>
        <end position="132"/>
    </location>
</feature>
<feature type="strand" evidence="8">
    <location>
        <begin position="136"/>
        <end position="140"/>
    </location>
</feature>
<feature type="strand" evidence="8">
    <location>
        <begin position="146"/>
        <end position="152"/>
    </location>
</feature>
<reference key="1">
    <citation type="submission" date="2002-03" db="EMBL/GenBank/DDBJ databases">
        <title>Member of C-type lectin family from Deinagkistrodon acutus.</title>
        <authorList>
            <person name="Yu H."/>
            <person name="Xiang K."/>
            <person name="Wang Y."/>
            <person name="Liu J."/>
        </authorList>
    </citation>
    <scope>NUCLEOTIDE SEQUENCE [MRNA]</scope>
    <source>
        <tissue>Venom gland</tissue>
    </source>
</reference>
<reference key="2">
    <citation type="journal article" date="2003" name="Thromb. Haemost.">
        <title>A tetrameric glycoprotein Ib-binding protein, agglucetin, from Formosan pit viper: structure and interaction with human platelets.</title>
        <authorList>
            <person name="Wang W.J."/>
            <person name="Ling Q.D."/>
            <person name="Liau M.Y."/>
            <person name="Huang T.F."/>
        </authorList>
    </citation>
    <scope>NUCLEOTIDE SEQUENCE [MRNA]</scope>
    <source>
        <tissue>Venom gland</tissue>
    </source>
</reference>
<reference key="3">
    <citation type="journal article" date="2001" name="Thromb. Haemost.">
        <title>A novel tetrameric venom protein, agglucetin from Agkistrodon acutus, acts as a glycoprotein Ib agonist.</title>
        <authorList>
            <person name="Wang W.J."/>
            <person name="Huang T.F."/>
        </authorList>
    </citation>
    <scope>PARTIAL PROTEIN SEQUENCE</scope>
    <scope>FUNCTION</scope>
    <scope>SUBUNIT</scope>
    <source>
        <tissue>Venom</tissue>
    </source>
</reference>
<reference key="4">
    <citation type="journal article" date="2008" name="Biochem. Biophys. Res. Commun.">
        <title>Agglucetin, a tetrameric C-type lectin-like venom protein, regulates endothelial cell survival and promotes angiogenesis by activating integrin alphavbeta3 signaling.</title>
        <authorList>
            <person name="Wang W.J."/>
        </authorList>
    </citation>
    <scope>FUNCTION</scope>
</reference>
<reference key="5">
    <citation type="journal article" date="2012" name="Proteins">
        <title>Crystal structure of agkisacucetin, a Gpib-binding snake C-type lectin that inhibits platelet adhesion and aggregation.</title>
        <authorList>
            <person name="Gao Y."/>
            <person name="Ge H."/>
            <person name="Chen H."/>
            <person name="Li H."/>
            <person name="Liu Y."/>
            <person name="Chen L."/>
            <person name="Li X."/>
            <person name="Liu J."/>
            <person name="Niu L."/>
            <person name="Teng M."/>
        </authorList>
    </citation>
    <scope>X-RAY CRYSTALLOGRAPHY (1.91 ANGSTROMS) OF 24-154</scope>
    <scope>DISULFIDE BONDS</scope>
</reference>
<organism>
    <name type="scientific">Deinagkistrodon acutus</name>
    <name type="common">Hundred-pace snake</name>
    <name type="synonym">Agkistrodon acutus</name>
    <dbReference type="NCBI Taxonomy" id="36307"/>
    <lineage>
        <taxon>Eukaryota</taxon>
        <taxon>Metazoa</taxon>
        <taxon>Chordata</taxon>
        <taxon>Craniata</taxon>
        <taxon>Vertebrata</taxon>
        <taxon>Euteleostomi</taxon>
        <taxon>Lepidosauria</taxon>
        <taxon>Squamata</taxon>
        <taxon>Bifurcata</taxon>
        <taxon>Unidentata</taxon>
        <taxon>Episquamata</taxon>
        <taxon>Toxicofera</taxon>
        <taxon>Serpentes</taxon>
        <taxon>Colubroidea</taxon>
        <taxon>Viperidae</taxon>
        <taxon>Crotalinae</taxon>
        <taxon>Deinagkistrodon</taxon>
    </lineage>
</organism>